<dbReference type="EC" id="4.3.3.7" evidence="1"/>
<dbReference type="EMBL" id="CP000513">
    <property type="protein sequence ID" value="ABQ13193.1"/>
    <property type="molecule type" value="Genomic_DNA"/>
</dbReference>
<dbReference type="RefSeq" id="WP_012031418.1">
    <property type="nucleotide sequence ID" value="NC_009446.1"/>
</dbReference>
<dbReference type="SMR" id="A5EXM4"/>
<dbReference type="STRING" id="246195.DNO_1114"/>
<dbReference type="KEGG" id="dno:DNO_1114"/>
<dbReference type="eggNOG" id="COG0329">
    <property type="taxonomic scope" value="Bacteria"/>
</dbReference>
<dbReference type="HOGENOM" id="CLU_049343_7_1_6"/>
<dbReference type="OrthoDB" id="9782828at2"/>
<dbReference type="UniPathway" id="UPA00034">
    <property type="reaction ID" value="UER00017"/>
</dbReference>
<dbReference type="Proteomes" id="UP000000248">
    <property type="component" value="Chromosome"/>
</dbReference>
<dbReference type="GO" id="GO:0005829">
    <property type="term" value="C:cytosol"/>
    <property type="evidence" value="ECO:0007669"/>
    <property type="project" value="TreeGrafter"/>
</dbReference>
<dbReference type="GO" id="GO:0008840">
    <property type="term" value="F:4-hydroxy-tetrahydrodipicolinate synthase activity"/>
    <property type="evidence" value="ECO:0007669"/>
    <property type="project" value="UniProtKB-UniRule"/>
</dbReference>
<dbReference type="GO" id="GO:0019877">
    <property type="term" value="P:diaminopimelate biosynthetic process"/>
    <property type="evidence" value="ECO:0007669"/>
    <property type="project" value="UniProtKB-UniRule"/>
</dbReference>
<dbReference type="GO" id="GO:0009089">
    <property type="term" value="P:lysine biosynthetic process via diaminopimelate"/>
    <property type="evidence" value="ECO:0007669"/>
    <property type="project" value="UniProtKB-UniRule"/>
</dbReference>
<dbReference type="CDD" id="cd00950">
    <property type="entry name" value="DHDPS"/>
    <property type="match status" value="1"/>
</dbReference>
<dbReference type="Gene3D" id="3.20.20.70">
    <property type="entry name" value="Aldolase class I"/>
    <property type="match status" value="1"/>
</dbReference>
<dbReference type="HAMAP" id="MF_00418">
    <property type="entry name" value="DapA"/>
    <property type="match status" value="1"/>
</dbReference>
<dbReference type="InterPro" id="IPR013785">
    <property type="entry name" value="Aldolase_TIM"/>
</dbReference>
<dbReference type="InterPro" id="IPR005263">
    <property type="entry name" value="DapA"/>
</dbReference>
<dbReference type="InterPro" id="IPR002220">
    <property type="entry name" value="DapA-like"/>
</dbReference>
<dbReference type="InterPro" id="IPR020625">
    <property type="entry name" value="Schiff_base-form_aldolases_AS"/>
</dbReference>
<dbReference type="InterPro" id="IPR020624">
    <property type="entry name" value="Schiff_base-form_aldolases_CS"/>
</dbReference>
<dbReference type="NCBIfam" id="TIGR00674">
    <property type="entry name" value="dapA"/>
    <property type="match status" value="1"/>
</dbReference>
<dbReference type="PANTHER" id="PTHR12128:SF66">
    <property type="entry name" value="4-HYDROXY-2-OXOGLUTARATE ALDOLASE, MITOCHONDRIAL"/>
    <property type="match status" value="1"/>
</dbReference>
<dbReference type="PANTHER" id="PTHR12128">
    <property type="entry name" value="DIHYDRODIPICOLINATE SYNTHASE"/>
    <property type="match status" value="1"/>
</dbReference>
<dbReference type="Pfam" id="PF00701">
    <property type="entry name" value="DHDPS"/>
    <property type="match status" value="1"/>
</dbReference>
<dbReference type="PIRSF" id="PIRSF001365">
    <property type="entry name" value="DHDPS"/>
    <property type="match status" value="1"/>
</dbReference>
<dbReference type="PRINTS" id="PR00146">
    <property type="entry name" value="DHPICSNTHASE"/>
</dbReference>
<dbReference type="SMART" id="SM01130">
    <property type="entry name" value="DHDPS"/>
    <property type="match status" value="1"/>
</dbReference>
<dbReference type="SUPFAM" id="SSF51569">
    <property type="entry name" value="Aldolase"/>
    <property type="match status" value="1"/>
</dbReference>
<dbReference type="PROSITE" id="PS00665">
    <property type="entry name" value="DHDPS_1"/>
    <property type="match status" value="1"/>
</dbReference>
<dbReference type="PROSITE" id="PS00666">
    <property type="entry name" value="DHDPS_2"/>
    <property type="match status" value="1"/>
</dbReference>
<organism>
    <name type="scientific">Dichelobacter nodosus (strain VCS1703A)</name>
    <dbReference type="NCBI Taxonomy" id="246195"/>
    <lineage>
        <taxon>Bacteria</taxon>
        <taxon>Pseudomonadati</taxon>
        <taxon>Pseudomonadota</taxon>
        <taxon>Gammaproteobacteria</taxon>
        <taxon>Cardiobacteriales</taxon>
        <taxon>Cardiobacteriaceae</taxon>
        <taxon>Dichelobacter</taxon>
    </lineage>
</organism>
<name>DAPA_DICNV</name>
<keyword id="KW-0028">Amino-acid biosynthesis</keyword>
<keyword id="KW-0963">Cytoplasm</keyword>
<keyword id="KW-0220">Diaminopimelate biosynthesis</keyword>
<keyword id="KW-0456">Lyase</keyword>
<keyword id="KW-0457">Lysine biosynthesis</keyword>
<keyword id="KW-1185">Reference proteome</keyword>
<keyword id="KW-0704">Schiff base</keyword>
<proteinExistence type="inferred from homology"/>
<accession>A5EXM4</accession>
<comment type="function">
    <text evidence="1">Catalyzes the condensation of (S)-aspartate-beta-semialdehyde [(S)-ASA] and pyruvate to 4-hydroxy-tetrahydrodipicolinate (HTPA).</text>
</comment>
<comment type="catalytic activity">
    <reaction evidence="1">
        <text>L-aspartate 4-semialdehyde + pyruvate = (2S,4S)-4-hydroxy-2,3,4,5-tetrahydrodipicolinate + H2O + H(+)</text>
        <dbReference type="Rhea" id="RHEA:34171"/>
        <dbReference type="ChEBI" id="CHEBI:15361"/>
        <dbReference type="ChEBI" id="CHEBI:15377"/>
        <dbReference type="ChEBI" id="CHEBI:15378"/>
        <dbReference type="ChEBI" id="CHEBI:67139"/>
        <dbReference type="ChEBI" id="CHEBI:537519"/>
        <dbReference type="EC" id="4.3.3.7"/>
    </reaction>
</comment>
<comment type="pathway">
    <text evidence="1">Amino-acid biosynthesis; L-lysine biosynthesis via DAP pathway; (S)-tetrahydrodipicolinate from L-aspartate: step 3/4.</text>
</comment>
<comment type="subunit">
    <text evidence="1">Homotetramer; dimer of dimers.</text>
</comment>
<comment type="subcellular location">
    <subcellularLocation>
        <location evidence="1">Cytoplasm</location>
    </subcellularLocation>
</comment>
<comment type="similarity">
    <text evidence="1">Belongs to the DapA family.</text>
</comment>
<comment type="caution">
    <text evidence="2">Was originally thought to be a dihydrodipicolinate synthase (DHDPS), catalyzing the condensation of (S)-aspartate-beta-semialdehyde [(S)-ASA] and pyruvate to dihydrodipicolinate (DHDP). However, it was shown in E.coli that the product of the enzymatic reaction is not dihydrodipicolinate but in fact (4S)-4-hydroxy-2,3,4,5-tetrahydro-(2S)-dipicolinic acid (HTPA), and that the consecutive dehydration reaction leading to DHDP is not spontaneous but catalyzed by DapB.</text>
</comment>
<feature type="chain" id="PRO_1000050186" description="4-hydroxy-tetrahydrodipicolinate synthase">
    <location>
        <begin position="1"/>
        <end position="297"/>
    </location>
</feature>
<feature type="active site" description="Proton donor/acceptor" evidence="1">
    <location>
        <position position="133"/>
    </location>
</feature>
<feature type="active site" description="Schiff-base intermediate with substrate" evidence="1">
    <location>
        <position position="161"/>
    </location>
</feature>
<feature type="binding site" evidence="1">
    <location>
        <position position="45"/>
    </location>
    <ligand>
        <name>pyruvate</name>
        <dbReference type="ChEBI" id="CHEBI:15361"/>
    </ligand>
</feature>
<feature type="binding site" evidence="1">
    <location>
        <position position="205"/>
    </location>
    <ligand>
        <name>pyruvate</name>
        <dbReference type="ChEBI" id="CHEBI:15361"/>
    </ligand>
</feature>
<feature type="site" description="Part of a proton relay during catalysis" evidence="1">
    <location>
        <position position="44"/>
    </location>
</feature>
<feature type="site" description="Part of a proton relay during catalysis" evidence="1">
    <location>
        <position position="107"/>
    </location>
</feature>
<protein>
    <recommendedName>
        <fullName evidence="1">4-hydroxy-tetrahydrodipicolinate synthase</fullName>
        <shortName evidence="1">HTPA synthase</shortName>
        <ecNumber evidence="1">4.3.3.7</ecNumber>
    </recommendedName>
</protein>
<sequence>MFTGSLVALVTPMHIDGSIDWQALEALINWHIASQTQAIVVAGTTGEAATLTLDEHKAIMRFCVDIANDRIPIIAGAGANATARAIELTLAAYHCGCAASLQVTPYYNRPPQRGLYAHFAKIAAAAPLPMILYNVPTRTACDIALETVTALAKITHIIGIKEATPHARLAQIRQLFPKNQSFKIYGGEDALCAQAACEGLIDGVISVTANVAPEAMQNMMHCALNGDLKQAQAINQRLAALHESLFCETNPIAVKWALQRMGKIAAGIRLPLMPLDERWHESLTAALVAAGITIQTH</sequence>
<reference key="1">
    <citation type="journal article" date="2007" name="Nat. Biotechnol.">
        <title>Genome sequence and identification of candidate vaccine antigens from the animal pathogen Dichelobacter nodosus.</title>
        <authorList>
            <person name="Myers G.S.A."/>
            <person name="Parker D."/>
            <person name="Al-Hasani K."/>
            <person name="Kennan R.M."/>
            <person name="Seemann T."/>
            <person name="Ren Q."/>
            <person name="Badger J.H."/>
            <person name="Selengut J.D."/>
            <person name="Deboy R.T."/>
            <person name="Tettelin H."/>
            <person name="Boyce J.D."/>
            <person name="McCarl V.P."/>
            <person name="Han X."/>
            <person name="Nelson W.C."/>
            <person name="Madupu R."/>
            <person name="Mohamoud Y."/>
            <person name="Holley T."/>
            <person name="Fedorova N."/>
            <person name="Khouri H."/>
            <person name="Bottomley S.P."/>
            <person name="Whittington R.J."/>
            <person name="Adler B."/>
            <person name="Songer J.G."/>
            <person name="Rood J.I."/>
            <person name="Paulsen I.T."/>
        </authorList>
    </citation>
    <scope>NUCLEOTIDE SEQUENCE [LARGE SCALE GENOMIC DNA]</scope>
    <source>
        <strain>VCS1703A</strain>
    </source>
</reference>
<evidence type="ECO:0000255" key="1">
    <source>
        <dbReference type="HAMAP-Rule" id="MF_00418"/>
    </source>
</evidence>
<evidence type="ECO:0000305" key="2"/>
<gene>
    <name evidence="1" type="primary">dapA</name>
    <name type="ordered locus">DNO_1114</name>
</gene>